<keyword id="KW-0066">ATP synthesis</keyword>
<keyword id="KW-0067">ATP-binding</keyword>
<keyword id="KW-1003">Cell membrane</keyword>
<keyword id="KW-0139">CF(1)</keyword>
<keyword id="KW-0375">Hydrogen ion transport</keyword>
<keyword id="KW-0406">Ion transport</keyword>
<keyword id="KW-0472">Membrane</keyword>
<keyword id="KW-0547">Nucleotide-binding</keyword>
<keyword id="KW-1185">Reference proteome</keyword>
<keyword id="KW-1278">Translocase</keyword>
<keyword id="KW-0813">Transport</keyword>
<gene>
    <name evidence="1" type="primary">atpD</name>
    <name type="ordered locus">SUB0672</name>
</gene>
<reference key="1">
    <citation type="journal article" date="2009" name="BMC Genomics">
        <title>Evidence for niche adaptation in the genome of the bovine pathogen Streptococcus uberis.</title>
        <authorList>
            <person name="Ward P.N."/>
            <person name="Holden M.T.G."/>
            <person name="Leigh J.A."/>
            <person name="Lennard N."/>
            <person name="Bignell A."/>
            <person name="Barron A."/>
            <person name="Clark L."/>
            <person name="Quail M.A."/>
            <person name="Woodward J."/>
            <person name="Barrell B.G."/>
            <person name="Egan S.A."/>
            <person name="Field T.R."/>
            <person name="Maskell D."/>
            <person name="Kehoe M."/>
            <person name="Dowson C.G."/>
            <person name="Chanter N."/>
            <person name="Whatmore A.M."/>
            <person name="Bentley S.D."/>
            <person name="Parkhill J."/>
        </authorList>
    </citation>
    <scope>NUCLEOTIDE SEQUENCE [LARGE SCALE GENOMIC DNA]</scope>
    <source>
        <strain>ATCC BAA-854 / 0140J</strain>
    </source>
</reference>
<proteinExistence type="inferred from homology"/>
<accession>B9DRT6</accession>
<dbReference type="EC" id="7.1.2.2" evidence="1"/>
<dbReference type="EMBL" id="AM946015">
    <property type="protein sequence ID" value="CAR41560.1"/>
    <property type="molecule type" value="Genomic_DNA"/>
</dbReference>
<dbReference type="RefSeq" id="WP_012658190.1">
    <property type="nucleotide sequence ID" value="NC_012004.1"/>
</dbReference>
<dbReference type="SMR" id="B9DRT6"/>
<dbReference type="STRING" id="218495.SUB0672"/>
<dbReference type="KEGG" id="sub:SUB0672"/>
<dbReference type="eggNOG" id="COG0055">
    <property type="taxonomic scope" value="Bacteria"/>
</dbReference>
<dbReference type="HOGENOM" id="CLU_022398_0_2_9"/>
<dbReference type="OrthoDB" id="9801639at2"/>
<dbReference type="Proteomes" id="UP000000449">
    <property type="component" value="Chromosome"/>
</dbReference>
<dbReference type="GO" id="GO:0005886">
    <property type="term" value="C:plasma membrane"/>
    <property type="evidence" value="ECO:0007669"/>
    <property type="project" value="UniProtKB-SubCell"/>
</dbReference>
<dbReference type="GO" id="GO:0045259">
    <property type="term" value="C:proton-transporting ATP synthase complex"/>
    <property type="evidence" value="ECO:0007669"/>
    <property type="project" value="UniProtKB-KW"/>
</dbReference>
<dbReference type="GO" id="GO:0005524">
    <property type="term" value="F:ATP binding"/>
    <property type="evidence" value="ECO:0007669"/>
    <property type="project" value="UniProtKB-UniRule"/>
</dbReference>
<dbReference type="GO" id="GO:0016887">
    <property type="term" value="F:ATP hydrolysis activity"/>
    <property type="evidence" value="ECO:0007669"/>
    <property type="project" value="InterPro"/>
</dbReference>
<dbReference type="GO" id="GO:0046933">
    <property type="term" value="F:proton-transporting ATP synthase activity, rotational mechanism"/>
    <property type="evidence" value="ECO:0007669"/>
    <property type="project" value="UniProtKB-UniRule"/>
</dbReference>
<dbReference type="CDD" id="cd18110">
    <property type="entry name" value="ATP-synt_F1_beta_C"/>
    <property type="match status" value="1"/>
</dbReference>
<dbReference type="CDD" id="cd18115">
    <property type="entry name" value="ATP-synt_F1_beta_N"/>
    <property type="match status" value="1"/>
</dbReference>
<dbReference type="CDD" id="cd01133">
    <property type="entry name" value="F1-ATPase_beta_CD"/>
    <property type="match status" value="1"/>
</dbReference>
<dbReference type="FunFam" id="1.10.1140.10:FF:000001">
    <property type="entry name" value="ATP synthase subunit beta"/>
    <property type="match status" value="1"/>
</dbReference>
<dbReference type="FunFam" id="2.40.10.170:FF:000005">
    <property type="entry name" value="ATP synthase subunit beta"/>
    <property type="match status" value="1"/>
</dbReference>
<dbReference type="FunFam" id="3.40.50.300:FF:000004">
    <property type="entry name" value="ATP synthase subunit beta"/>
    <property type="match status" value="1"/>
</dbReference>
<dbReference type="Gene3D" id="2.40.10.170">
    <property type="match status" value="1"/>
</dbReference>
<dbReference type="Gene3D" id="1.10.1140.10">
    <property type="entry name" value="Bovine Mitochondrial F1-atpase, Atp Synthase Beta Chain, Chain D, domain 3"/>
    <property type="match status" value="1"/>
</dbReference>
<dbReference type="Gene3D" id="3.40.50.300">
    <property type="entry name" value="P-loop containing nucleotide triphosphate hydrolases"/>
    <property type="match status" value="1"/>
</dbReference>
<dbReference type="HAMAP" id="MF_01347">
    <property type="entry name" value="ATP_synth_beta_bact"/>
    <property type="match status" value="1"/>
</dbReference>
<dbReference type="InterPro" id="IPR003593">
    <property type="entry name" value="AAA+_ATPase"/>
</dbReference>
<dbReference type="InterPro" id="IPR055190">
    <property type="entry name" value="ATP-synt_VA_C"/>
</dbReference>
<dbReference type="InterPro" id="IPR005722">
    <property type="entry name" value="ATP_synth_F1_bsu"/>
</dbReference>
<dbReference type="InterPro" id="IPR020003">
    <property type="entry name" value="ATPase_a/bsu_AS"/>
</dbReference>
<dbReference type="InterPro" id="IPR050053">
    <property type="entry name" value="ATPase_alpha/beta_chains"/>
</dbReference>
<dbReference type="InterPro" id="IPR004100">
    <property type="entry name" value="ATPase_F1/V1/A1_a/bsu_N"/>
</dbReference>
<dbReference type="InterPro" id="IPR036121">
    <property type="entry name" value="ATPase_F1/V1/A1_a/bsu_N_sf"/>
</dbReference>
<dbReference type="InterPro" id="IPR000194">
    <property type="entry name" value="ATPase_F1/V1/A1_a/bsu_nucl-bd"/>
</dbReference>
<dbReference type="InterPro" id="IPR024034">
    <property type="entry name" value="ATPase_F1/V1_b/a_C"/>
</dbReference>
<dbReference type="InterPro" id="IPR027417">
    <property type="entry name" value="P-loop_NTPase"/>
</dbReference>
<dbReference type="NCBIfam" id="TIGR01039">
    <property type="entry name" value="atpD"/>
    <property type="match status" value="1"/>
</dbReference>
<dbReference type="PANTHER" id="PTHR15184">
    <property type="entry name" value="ATP SYNTHASE"/>
    <property type="match status" value="1"/>
</dbReference>
<dbReference type="PANTHER" id="PTHR15184:SF71">
    <property type="entry name" value="ATP SYNTHASE SUBUNIT BETA, MITOCHONDRIAL"/>
    <property type="match status" value="1"/>
</dbReference>
<dbReference type="Pfam" id="PF00006">
    <property type="entry name" value="ATP-synt_ab"/>
    <property type="match status" value="1"/>
</dbReference>
<dbReference type="Pfam" id="PF02874">
    <property type="entry name" value="ATP-synt_ab_N"/>
    <property type="match status" value="1"/>
</dbReference>
<dbReference type="Pfam" id="PF22919">
    <property type="entry name" value="ATP-synt_VA_C"/>
    <property type="match status" value="1"/>
</dbReference>
<dbReference type="SMART" id="SM00382">
    <property type="entry name" value="AAA"/>
    <property type="match status" value="1"/>
</dbReference>
<dbReference type="SUPFAM" id="SSF47917">
    <property type="entry name" value="C-terminal domain of alpha and beta subunits of F1 ATP synthase"/>
    <property type="match status" value="1"/>
</dbReference>
<dbReference type="SUPFAM" id="SSF50615">
    <property type="entry name" value="N-terminal domain of alpha and beta subunits of F1 ATP synthase"/>
    <property type="match status" value="1"/>
</dbReference>
<dbReference type="SUPFAM" id="SSF52540">
    <property type="entry name" value="P-loop containing nucleoside triphosphate hydrolases"/>
    <property type="match status" value="1"/>
</dbReference>
<dbReference type="PROSITE" id="PS00152">
    <property type="entry name" value="ATPASE_ALPHA_BETA"/>
    <property type="match status" value="1"/>
</dbReference>
<organism>
    <name type="scientific">Streptococcus uberis (strain ATCC BAA-854 / 0140J)</name>
    <dbReference type="NCBI Taxonomy" id="218495"/>
    <lineage>
        <taxon>Bacteria</taxon>
        <taxon>Bacillati</taxon>
        <taxon>Bacillota</taxon>
        <taxon>Bacilli</taxon>
        <taxon>Lactobacillales</taxon>
        <taxon>Streptococcaceae</taxon>
        <taxon>Streptococcus</taxon>
    </lineage>
</organism>
<feature type="chain" id="PRO_1000166607" description="ATP synthase subunit beta">
    <location>
        <begin position="1"/>
        <end position="468"/>
    </location>
</feature>
<feature type="binding site" evidence="1">
    <location>
        <begin position="155"/>
        <end position="162"/>
    </location>
    <ligand>
        <name>ATP</name>
        <dbReference type="ChEBI" id="CHEBI:30616"/>
    </ligand>
</feature>
<name>ATPB_STRU0</name>
<protein>
    <recommendedName>
        <fullName evidence="1">ATP synthase subunit beta</fullName>
        <ecNumber evidence="1">7.1.2.2</ecNumber>
    </recommendedName>
    <alternativeName>
        <fullName evidence="1">ATP synthase F1 sector subunit beta</fullName>
    </alternativeName>
    <alternativeName>
        <fullName evidence="1">F-ATPase subunit beta</fullName>
    </alternativeName>
</protein>
<evidence type="ECO:0000255" key="1">
    <source>
        <dbReference type="HAMAP-Rule" id="MF_01347"/>
    </source>
</evidence>
<comment type="function">
    <text evidence="1">Produces ATP from ADP in the presence of a proton gradient across the membrane. The catalytic sites are hosted primarily by the beta subunits.</text>
</comment>
<comment type="catalytic activity">
    <reaction evidence="1">
        <text>ATP + H2O + 4 H(+)(in) = ADP + phosphate + 5 H(+)(out)</text>
        <dbReference type="Rhea" id="RHEA:57720"/>
        <dbReference type="ChEBI" id="CHEBI:15377"/>
        <dbReference type="ChEBI" id="CHEBI:15378"/>
        <dbReference type="ChEBI" id="CHEBI:30616"/>
        <dbReference type="ChEBI" id="CHEBI:43474"/>
        <dbReference type="ChEBI" id="CHEBI:456216"/>
        <dbReference type="EC" id="7.1.2.2"/>
    </reaction>
</comment>
<comment type="subunit">
    <text evidence="1">F-type ATPases have 2 components, CF(1) - the catalytic core - and CF(0) - the membrane proton channel. CF(1) has five subunits: alpha(3), beta(3), gamma(1), delta(1), epsilon(1). CF(0) has three main subunits: a(1), b(2) and c(9-12). The alpha and beta chains form an alternating ring which encloses part of the gamma chain. CF(1) is attached to CF(0) by a central stalk formed by the gamma and epsilon chains, while a peripheral stalk is formed by the delta and b chains.</text>
</comment>
<comment type="subcellular location">
    <subcellularLocation>
        <location evidence="1">Cell membrane</location>
        <topology evidence="1">Peripheral membrane protein</topology>
    </subcellularLocation>
</comment>
<comment type="similarity">
    <text evidence="1">Belongs to the ATPase alpha/beta chains family.</text>
</comment>
<sequence>MSSGKIAQVVGPVVDVVFANGEKLPEINNALIVYKDSDKKQKIVLEVALELGDGMVRTIAMESTDGLTRGLEVLDTGRAISVPVGKETLGRVFNVLGETIDLDEPFAADAAREPIHKKAPAFDELSTSSEILETGIKVIDLLAPYLKGGKVGLFGGAGVGKTVLIQELIHNIAQEHGGISVFTGVGERTREGNDLYWEMKESGVIEKTAMVFGQMNEPPGARMRVALTGLTIAEYFRDVEGQDVLLFIDNIFRFTQAGSEVSALLGRMPSAVGYQPTLATEMGQLQERITSTNKGSVTSIQAIYVPADDYTDPAPATAFAHLDSTTNLERKLTQMGIYPAVDPLASSSRALSPEIVGQEHYEVATEVQRVLQRYRELQDIIAILGMDELSDDEKVLVGRARRIQFFLSQNFNVAEQFTGQPGSYVPVADTVRSFKEILEGKYDHIPEDAFRSVGPIEDVLEKAKSMGY</sequence>